<reference key="1">
    <citation type="journal article" date="2008" name="Planta">
        <title>Molecular cloning, functional characterization and expression analysis of a novel monosaccharide transporter gene OsMST6 from rice (Oryza sativa L.).</title>
        <authorList>
            <person name="Wang Y."/>
            <person name="Xiao Y."/>
            <person name="Zhang Y."/>
            <person name="Chai C."/>
            <person name="Wei G."/>
            <person name="Wei X."/>
            <person name="Xu H."/>
            <person name="Wang M."/>
            <person name="Ouwerkerk P.B."/>
            <person name="Zhu Z."/>
        </authorList>
    </citation>
    <scope>NUCLEOTIDE SEQUENCE [MRNA]</scope>
    <scope>FUNCTION</scope>
    <scope>BIOPHYSICOCHEMICAL PROPERTIES</scope>
    <scope>SUBCELLULAR LOCATION</scope>
    <scope>TISSUE SPECIFICITY</scope>
    <scope>INDUCTION</scope>
</reference>
<reference key="2">
    <citation type="journal article" date="2005" name="Nature">
        <title>The map-based sequence of the rice genome.</title>
        <authorList>
            <consortium name="International rice genome sequencing project (IRGSP)"/>
        </authorList>
    </citation>
    <scope>NUCLEOTIDE SEQUENCE [LARGE SCALE GENOMIC DNA]</scope>
    <source>
        <strain>cv. Nipponbare</strain>
    </source>
</reference>
<reference key="3">
    <citation type="journal article" date="2008" name="Nucleic Acids Res.">
        <title>The rice annotation project database (RAP-DB): 2008 update.</title>
        <authorList>
            <consortium name="The rice annotation project (RAP)"/>
        </authorList>
    </citation>
    <scope>GENOME REANNOTATION</scope>
    <source>
        <strain>cv. Nipponbare</strain>
    </source>
</reference>
<reference key="4">
    <citation type="journal article" date="2013" name="Rice">
        <title>Improvement of the Oryza sativa Nipponbare reference genome using next generation sequence and optical map data.</title>
        <authorList>
            <person name="Kawahara Y."/>
            <person name="de la Bastide M."/>
            <person name="Hamilton J.P."/>
            <person name="Kanamori H."/>
            <person name="McCombie W.R."/>
            <person name="Ouyang S."/>
            <person name="Schwartz D.C."/>
            <person name="Tanaka T."/>
            <person name="Wu J."/>
            <person name="Zhou S."/>
            <person name="Childs K.L."/>
            <person name="Davidson R.M."/>
            <person name="Lin H."/>
            <person name="Quesada-Ocampo L."/>
            <person name="Vaillancourt B."/>
            <person name="Sakai H."/>
            <person name="Lee S.S."/>
            <person name="Kim J."/>
            <person name="Numa H."/>
            <person name="Itoh T."/>
            <person name="Buell C.R."/>
            <person name="Matsumoto T."/>
        </authorList>
    </citation>
    <scope>GENOME REANNOTATION</scope>
    <source>
        <strain>cv. Nipponbare</strain>
    </source>
</reference>
<reference key="5">
    <citation type="journal article" date="2005" name="PLoS Biol.">
        <title>The genomes of Oryza sativa: a history of duplications.</title>
        <authorList>
            <person name="Yu J."/>
            <person name="Wang J."/>
            <person name="Lin W."/>
            <person name="Li S."/>
            <person name="Li H."/>
            <person name="Zhou J."/>
            <person name="Ni P."/>
            <person name="Dong W."/>
            <person name="Hu S."/>
            <person name="Zeng C."/>
            <person name="Zhang J."/>
            <person name="Zhang Y."/>
            <person name="Li R."/>
            <person name="Xu Z."/>
            <person name="Li S."/>
            <person name="Li X."/>
            <person name="Zheng H."/>
            <person name="Cong L."/>
            <person name="Lin L."/>
            <person name="Yin J."/>
            <person name="Geng J."/>
            <person name="Li G."/>
            <person name="Shi J."/>
            <person name="Liu J."/>
            <person name="Lv H."/>
            <person name="Li J."/>
            <person name="Wang J."/>
            <person name="Deng Y."/>
            <person name="Ran L."/>
            <person name="Shi X."/>
            <person name="Wang X."/>
            <person name="Wu Q."/>
            <person name="Li C."/>
            <person name="Ren X."/>
            <person name="Wang J."/>
            <person name="Wang X."/>
            <person name="Li D."/>
            <person name="Liu D."/>
            <person name="Zhang X."/>
            <person name="Ji Z."/>
            <person name="Zhao W."/>
            <person name="Sun Y."/>
            <person name="Zhang Z."/>
            <person name="Bao J."/>
            <person name="Han Y."/>
            <person name="Dong L."/>
            <person name="Ji J."/>
            <person name="Chen P."/>
            <person name="Wu S."/>
            <person name="Liu J."/>
            <person name="Xiao Y."/>
            <person name="Bu D."/>
            <person name="Tan J."/>
            <person name="Yang L."/>
            <person name="Ye C."/>
            <person name="Zhang J."/>
            <person name="Xu J."/>
            <person name="Zhou Y."/>
            <person name="Yu Y."/>
            <person name="Zhang B."/>
            <person name="Zhuang S."/>
            <person name="Wei H."/>
            <person name="Liu B."/>
            <person name="Lei M."/>
            <person name="Yu H."/>
            <person name="Li Y."/>
            <person name="Xu H."/>
            <person name="Wei S."/>
            <person name="He X."/>
            <person name="Fang L."/>
            <person name="Zhang Z."/>
            <person name="Zhang Y."/>
            <person name="Huang X."/>
            <person name="Su Z."/>
            <person name="Tong W."/>
            <person name="Li J."/>
            <person name="Tong Z."/>
            <person name="Li S."/>
            <person name="Ye J."/>
            <person name="Wang L."/>
            <person name="Fang L."/>
            <person name="Lei T."/>
            <person name="Chen C.-S."/>
            <person name="Chen H.-C."/>
            <person name="Xu Z."/>
            <person name="Li H."/>
            <person name="Huang H."/>
            <person name="Zhang F."/>
            <person name="Xu H."/>
            <person name="Li N."/>
            <person name="Zhao C."/>
            <person name="Li S."/>
            <person name="Dong L."/>
            <person name="Huang Y."/>
            <person name="Li L."/>
            <person name="Xi Y."/>
            <person name="Qi Q."/>
            <person name="Li W."/>
            <person name="Zhang B."/>
            <person name="Hu W."/>
            <person name="Zhang Y."/>
            <person name="Tian X."/>
            <person name="Jiao Y."/>
            <person name="Liang X."/>
            <person name="Jin J."/>
            <person name="Gao L."/>
            <person name="Zheng W."/>
            <person name="Hao B."/>
            <person name="Liu S.-M."/>
            <person name="Wang W."/>
            <person name="Yuan L."/>
            <person name="Cao M."/>
            <person name="McDermott J."/>
            <person name="Samudrala R."/>
            <person name="Wang J."/>
            <person name="Wong G.K.-S."/>
            <person name="Yang H."/>
        </authorList>
    </citation>
    <scope>NUCLEOTIDE SEQUENCE [LARGE SCALE GENOMIC DNA]</scope>
    <source>
        <strain>cv. Nipponbare</strain>
    </source>
</reference>
<name>MST6_ORYSJ</name>
<sequence>MAGGVVVNNGGGKDYPGKLTMFVLFACIVAATGGLIFGYDIGISGGVTSMNPFLIKFFPSVYRKEQAAEKNQSNQYCKFDSPLLTMFTSSLYLAALVASFFASTVTRVAGRKWSMFGGGVTFLVGAALNGAAKNVLMLILGRVLLGVGVGFANQSVPLYLSEMAPARLRGMLNIGFQLMITIGILCANLINYGTAKIKGGWGWRVSLALAAVPAAIIAVGALFLPDTPNSLIDRGHTDAAKRMLRRVRGTDDIEEEYNDLVAASEESKLVAHPWRNILQRRYRPQLTMAIAIPLFQQLTGINVIMFYAPVLFKTLGFADDASLMSAVITGLVNVFATFVSIVTVDRLGRRKLFLQGGTQMLACQIVVGSLIGAKFGFSGVADIPKAYAAFVVLFICAYVAGFAWSWGPLGWLVPSEIFPLEIRSAGQSINVSVNMLFTFIIAQAFLPMLCRFKFILFFFFGAWVVIMTLFVAFFLPETKNVPIEEMVLVWKSHWYWGRFIRDEDVHVGADVEMPAAGNRNGKVDPAKLAN</sequence>
<proteinExistence type="evidence at protein level"/>
<organism>
    <name type="scientific">Oryza sativa subsp. japonica</name>
    <name type="common">Rice</name>
    <dbReference type="NCBI Taxonomy" id="39947"/>
    <lineage>
        <taxon>Eukaryota</taxon>
        <taxon>Viridiplantae</taxon>
        <taxon>Streptophyta</taxon>
        <taxon>Embryophyta</taxon>
        <taxon>Tracheophyta</taxon>
        <taxon>Spermatophyta</taxon>
        <taxon>Magnoliopsida</taxon>
        <taxon>Liliopsida</taxon>
        <taxon>Poales</taxon>
        <taxon>Poaceae</taxon>
        <taxon>BOP clade</taxon>
        <taxon>Oryzoideae</taxon>
        <taxon>Oryzeae</taxon>
        <taxon>Oryzinae</taxon>
        <taxon>Oryza</taxon>
        <taxon>Oryza sativa</taxon>
    </lineage>
</organism>
<keyword id="KW-1003">Cell membrane</keyword>
<keyword id="KW-0472">Membrane</keyword>
<keyword id="KW-1185">Reference proteome</keyword>
<keyword id="KW-0762">Sugar transport</keyword>
<keyword id="KW-0769">Symport</keyword>
<keyword id="KW-0812">Transmembrane</keyword>
<keyword id="KW-1133">Transmembrane helix</keyword>
<keyword id="KW-0813">Transport</keyword>
<comment type="function">
    <text evidence="2 5">Mediates active uptake of hexoses by sugar:proton symport (Probable). Can transport glucose, fructose, mannose, galactose, xylose and ribose (PubMed:18506478).</text>
</comment>
<comment type="biophysicochemical properties">
    <kinetics>
        <KM evidence="2">266.1 uM for glucose</KM>
        <KM evidence="2">256.9 uM for fructose</KM>
        <KM evidence="2">108.4 uM for mannose</KM>
        <KM evidence="2">48.7 uM for galactose</KM>
        <KM evidence="2">109.6 uM for ribose</KM>
        <KM evidence="2">151 uM for xylose</KM>
    </kinetics>
</comment>
<comment type="subcellular location">
    <subcellularLocation>
        <location evidence="2">Cell membrane</location>
        <topology evidence="1">Multi-pass membrane protein</topology>
    </subcellularLocation>
</comment>
<comment type="tissue specificity">
    <text evidence="2">Expressed in leaf blades, leaf sheaths, anthers, ovaries and embryos. Expressed at low levels in roots and shoots.</text>
</comment>
<comment type="induction">
    <text evidence="2">Induced by glucose, sucrose and salt stress.</text>
</comment>
<comment type="similarity">
    <text evidence="4">Belongs to the major facilitator superfamily. Sugar transporter (TC 2.A.1.1) family.</text>
</comment>
<protein>
    <recommendedName>
        <fullName evidence="4">Sugar transport protein MST6</fullName>
    </recommendedName>
    <alternativeName>
        <fullName evidence="3">Monosaccharide transporter 6</fullName>
        <shortName evidence="3">OsMST5</shortName>
    </alternativeName>
    <alternativeName>
        <fullName evidence="4">Sugar:proton symporter MST6</fullName>
    </alternativeName>
</protein>
<gene>
    <name evidence="3" type="primary">MST6</name>
    <name evidence="7" type="ordered locus">Os07g0559700</name>
    <name evidence="4" type="ordered locus">LOC_Os07g37320</name>
    <name evidence="8" type="ORF">OsJ_24726</name>
    <name evidence="6" type="ORF">P0567H04.25</name>
</gene>
<dbReference type="EMBL" id="AY342322">
    <property type="protein sequence ID" value="AAQ24872.1"/>
    <property type="molecule type" value="mRNA"/>
</dbReference>
<dbReference type="EMBL" id="AP005195">
    <property type="protein sequence ID" value="BAC84043.1"/>
    <property type="molecule type" value="Genomic_DNA"/>
</dbReference>
<dbReference type="EMBL" id="AP008213">
    <property type="protein sequence ID" value="BAF21895.1"/>
    <property type="molecule type" value="Genomic_DNA"/>
</dbReference>
<dbReference type="EMBL" id="AP014963">
    <property type="protein sequence ID" value="BAT02130.1"/>
    <property type="molecule type" value="Genomic_DNA"/>
</dbReference>
<dbReference type="EMBL" id="CM000144">
    <property type="protein sequence ID" value="EAZ40284.1"/>
    <property type="molecule type" value="Genomic_DNA"/>
</dbReference>
<dbReference type="SMR" id="Q6Z401"/>
<dbReference type="FunCoup" id="Q6Z401">
    <property type="interactions" value="204"/>
</dbReference>
<dbReference type="STRING" id="39947.Q6Z401"/>
<dbReference type="PaxDb" id="39947-Q6Z401"/>
<dbReference type="EnsemblPlants" id="Os07t0559700-01">
    <property type="protein sequence ID" value="Os07t0559700-01"/>
    <property type="gene ID" value="Os07g0559700"/>
</dbReference>
<dbReference type="GeneID" id="4343590"/>
<dbReference type="Gramene" id="Os07t0559700-01">
    <property type="protein sequence ID" value="Os07t0559700-01"/>
    <property type="gene ID" value="Os07g0559700"/>
</dbReference>
<dbReference type="KEGG" id="dosa:Os07g0559700"/>
<dbReference type="KEGG" id="osa:4343590"/>
<dbReference type="eggNOG" id="KOG0254">
    <property type="taxonomic scope" value="Eukaryota"/>
</dbReference>
<dbReference type="HOGENOM" id="CLU_001265_30_5_1"/>
<dbReference type="InParanoid" id="Q6Z401"/>
<dbReference type="OMA" id="IYYFGTL"/>
<dbReference type="OrthoDB" id="5296287at2759"/>
<dbReference type="Proteomes" id="UP000000763">
    <property type="component" value="Chromosome 7"/>
</dbReference>
<dbReference type="Proteomes" id="UP000007752">
    <property type="component" value="Chromosome 7"/>
</dbReference>
<dbReference type="Proteomes" id="UP000059680">
    <property type="component" value="Chromosome 7"/>
</dbReference>
<dbReference type="GO" id="GO:0005886">
    <property type="term" value="C:plasma membrane"/>
    <property type="evidence" value="ECO:0007669"/>
    <property type="project" value="UniProtKB-SubCell"/>
</dbReference>
<dbReference type="GO" id="GO:0015145">
    <property type="term" value="F:monosaccharide transmembrane transporter activity"/>
    <property type="evidence" value="ECO:0007669"/>
    <property type="project" value="InterPro"/>
</dbReference>
<dbReference type="GO" id="GO:0015293">
    <property type="term" value="F:symporter activity"/>
    <property type="evidence" value="ECO:0007669"/>
    <property type="project" value="UniProtKB-KW"/>
</dbReference>
<dbReference type="CDD" id="cd17361">
    <property type="entry name" value="MFS_STP"/>
    <property type="match status" value="1"/>
</dbReference>
<dbReference type="FunFam" id="1.20.1250.20:FF:000002">
    <property type="entry name" value="Sugar transport protein 13"/>
    <property type="match status" value="1"/>
</dbReference>
<dbReference type="Gene3D" id="1.20.1250.20">
    <property type="entry name" value="MFS general substrate transporter like domains"/>
    <property type="match status" value="1"/>
</dbReference>
<dbReference type="InterPro" id="IPR020846">
    <property type="entry name" value="MFS_dom"/>
</dbReference>
<dbReference type="InterPro" id="IPR044778">
    <property type="entry name" value="MFS_STP/MST-like_plant"/>
</dbReference>
<dbReference type="InterPro" id="IPR005828">
    <property type="entry name" value="MFS_sugar_transport-like"/>
</dbReference>
<dbReference type="InterPro" id="IPR036259">
    <property type="entry name" value="MFS_trans_sf"/>
</dbReference>
<dbReference type="InterPro" id="IPR045262">
    <property type="entry name" value="STP/PLT_plant"/>
</dbReference>
<dbReference type="InterPro" id="IPR003663">
    <property type="entry name" value="Sugar/inositol_transpt"/>
</dbReference>
<dbReference type="InterPro" id="IPR005829">
    <property type="entry name" value="Sugar_transporter_CS"/>
</dbReference>
<dbReference type="NCBIfam" id="TIGR00879">
    <property type="entry name" value="SP"/>
    <property type="match status" value="1"/>
</dbReference>
<dbReference type="PANTHER" id="PTHR23500">
    <property type="entry name" value="SOLUTE CARRIER FAMILY 2, FACILITATED GLUCOSE TRANSPORTER"/>
    <property type="match status" value="1"/>
</dbReference>
<dbReference type="PANTHER" id="PTHR23500:SF556">
    <property type="entry name" value="SUGAR TRANSPORT PROTEIN MST6"/>
    <property type="match status" value="1"/>
</dbReference>
<dbReference type="Pfam" id="PF00083">
    <property type="entry name" value="Sugar_tr"/>
    <property type="match status" value="1"/>
</dbReference>
<dbReference type="PRINTS" id="PR00171">
    <property type="entry name" value="SUGRTRNSPORT"/>
</dbReference>
<dbReference type="SUPFAM" id="SSF103473">
    <property type="entry name" value="MFS general substrate transporter"/>
    <property type="match status" value="1"/>
</dbReference>
<dbReference type="PROSITE" id="PS50850">
    <property type="entry name" value="MFS"/>
    <property type="match status" value="1"/>
</dbReference>
<dbReference type="PROSITE" id="PS00216">
    <property type="entry name" value="SUGAR_TRANSPORT_1"/>
    <property type="match status" value="1"/>
</dbReference>
<dbReference type="PROSITE" id="PS00217">
    <property type="entry name" value="SUGAR_TRANSPORT_2"/>
    <property type="match status" value="1"/>
</dbReference>
<accession>Q6Z401</accession>
<accession>Q6VEF1</accession>
<feature type="chain" id="PRO_0000441040" description="Sugar transport protein MST6">
    <location>
        <begin position="1"/>
        <end position="530"/>
    </location>
</feature>
<feature type="topological domain" description="Cytoplasmic" evidence="4">
    <location>
        <begin position="1"/>
        <end position="18"/>
    </location>
</feature>
<feature type="transmembrane region" description="Helical" evidence="1">
    <location>
        <begin position="19"/>
        <end position="39"/>
    </location>
</feature>
<feature type="topological domain" description="Extracellular" evidence="4">
    <location>
        <begin position="40"/>
        <end position="81"/>
    </location>
</feature>
<feature type="transmembrane region" description="Helical" evidence="1">
    <location>
        <begin position="82"/>
        <end position="102"/>
    </location>
</feature>
<feature type="topological domain" description="Cytoplasmic" evidence="4">
    <location>
        <begin position="103"/>
        <end position="119"/>
    </location>
</feature>
<feature type="transmembrane region" description="Helical" evidence="1">
    <location>
        <begin position="120"/>
        <end position="140"/>
    </location>
</feature>
<feature type="topological domain" description="Extracellular" evidence="4">
    <location>
        <begin position="141"/>
        <end position="142"/>
    </location>
</feature>
<feature type="transmembrane region" description="Helical" evidence="1">
    <location>
        <begin position="143"/>
        <end position="163"/>
    </location>
</feature>
<feature type="topological domain" description="Cytoplasmic" evidence="4">
    <location>
        <begin position="164"/>
        <end position="169"/>
    </location>
</feature>
<feature type="transmembrane region" description="Helical" evidence="1">
    <location>
        <begin position="170"/>
        <end position="190"/>
    </location>
</feature>
<feature type="topological domain" description="Extracellular" evidence="4">
    <location>
        <begin position="191"/>
        <end position="204"/>
    </location>
</feature>
<feature type="transmembrane region" description="Helical" evidence="1">
    <location>
        <begin position="205"/>
        <end position="225"/>
    </location>
</feature>
<feature type="topological domain" description="Cytoplasmic" evidence="4">
    <location>
        <begin position="226"/>
        <end position="291"/>
    </location>
</feature>
<feature type="transmembrane region" description="Helical" evidence="1">
    <location>
        <begin position="292"/>
        <end position="312"/>
    </location>
</feature>
<feature type="topological domain" description="Extracellular" evidence="4">
    <location>
        <begin position="313"/>
        <end position="323"/>
    </location>
</feature>
<feature type="transmembrane region" description="Helical" evidence="1">
    <location>
        <begin position="324"/>
        <end position="344"/>
    </location>
</feature>
<feature type="topological domain" description="Cytoplasmic" evidence="4">
    <location>
        <begin position="345"/>
        <end position="359"/>
    </location>
</feature>
<feature type="transmembrane region" description="Helical" evidence="1">
    <location>
        <begin position="360"/>
        <end position="380"/>
    </location>
</feature>
<feature type="topological domain" description="Extracellular" evidence="4">
    <location>
        <begin position="381"/>
        <end position="388"/>
    </location>
</feature>
<feature type="transmembrane region" description="Helical" evidence="1">
    <location>
        <begin position="389"/>
        <end position="409"/>
    </location>
</feature>
<feature type="topological domain" description="Cytoplasmic" evidence="4">
    <location>
        <begin position="410"/>
        <end position="428"/>
    </location>
</feature>
<feature type="transmembrane region" description="Helical" evidence="1">
    <location>
        <begin position="429"/>
        <end position="449"/>
    </location>
</feature>
<feature type="topological domain" description="Extracellular" evidence="4">
    <location>
        <begin position="450"/>
        <end position="453"/>
    </location>
</feature>
<feature type="transmembrane region" description="Helical" evidence="1">
    <location>
        <begin position="454"/>
        <end position="474"/>
    </location>
</feature>
<feature type="topological domain" description="Cytoplasmic" evidence="4">
    <location>
        <begin position="475"/>
        <end position="530"/>
    </location>
</feature>
<feature type="sequence conflict" description="In Ref. 1; AAQ24872." evidence="4" ref="1">
    <original>S</original>
    <variation>G</variation>
    <location>
        <position position="369"/>
    </location>
</feature>
<feature type="sequence conflict" description="In Ref. 1; AAQ24872." evidence="4" ref="1">
    <original>K</original>
    <variation>E</variation>
    <location>
        <position position="374"/>
    </location>
</feature>
<feature type="sequence conflict" description="In Ref. 1; AAQ24872." evidence="4" ref="1">
    <location>
        <position position="457"/>
    </location>
</feature>
<evidence type="ECO:0000255" key="1"/>
<evidence type="ECO:0000269" key="2">
    <source>
    </source>
</evidence>
<evidence type="ECO:0000303" key="3">
    <source>
    </source>
</evidence>
<evidence type="ECO:0000305" key="4"/>
<evidence type="ECO:0000305" key="5">
    <source>
    </source>
</evidence>
<evidence type="ECO:0000312" key="6">
    <source>
        <dbReference type="EMBL" id="BAC84043.1"/>
    </source>
</evidence>
<evidence type="ECO:0000312" key="7">
    <source>
        <dbReference type="EMBL" id="BAF21895.1"/>
    </source>
</evidence>
<evidence type="ECO:0000312" key="8">
    <source>
        <dbReference type="EMBL" id="EAZ40284.1"/>
    </source>
</evidence>